<comment type="function">
    <text evidence="3 6 7">Catalyzes the initial reaction in O-linked oligosaccharide biosynthesis, the transfer of an N-acetyl-D-galactosamine (GalNAc) residue from UDP-GalNAc to a serine or threonine residue on the protein receptor (PubMed:12407114, PubMed:22186971). Generates GalNAc-O-Ser/Thr structure also known as Tn antigen, which itself is immunogenic but also serves as a precursor for the synthesis of different mucin-type O-glycan core structures (PubMed:12407114). Contributes to the synthesis of O-linked glycans on mucins and proteoglycans of the central nervous system. May promote neurogenesis through glycosylation and stabilization of PDPN (By similarity) (PubMed:12407114, PubMed:22186971).</text>
</comment>
<comment type="function">
    <molecule>Isoform 1</molecule>
    <text evidence="6 7">Can glycosylate both unmodified peptides and glycopeptides that already contain an O-linked GalNAc sugar. Transfers GalNAc to Thr-/Ser-rich tandem repeats GTTPSPVPTTSTTSAP of MUC5AC, specifically on Thr-3 of non-glycosylated MUC5AC peptide, on Thr-12 and Thr-13 of preglycosylated MUC5AC at Thr-3 (MUC5AC-3), on Thr-3 of preglycosylated MUC5AC at Thr-13 (MUC5AC-13) and on Thr-12 of preglycosylated MUC5AC at Thr-3 and Thr-13 (MUC5AC-3,13). Transfers GalNAc to three consecutive serine/threonine residues on SDC3 forming a triplet-Tn epitope expressed in Purkinje cells of the developing brain.</text>
</comment>
<comment type="function">
    <molecule>Isoform 3</molecule>
    <text evidence="7">Can glycosylate both unmodified peptides and glycopeptides that already contain an O-linked GalNAc sugar. Transfers GalNAc to Thr-/Ser-rich tandem repeats GTTPSPVPTTSTTSAP of MUC5AC, specifically on Thr-3 of non-glycosylated MUC5AC peptide, on Thr-12 and Thr-13 of preglycosylated MUC5AC at Thr-3 (MUC5AC-3), on Thr-3 of preglycosylated MUC5AC at Thr-13 (MUC5AC-13) and on Thr-12 of preglycosylated MUC5AC at Thr-3 and Thr-13 (MUC5AC-3,13).</text>
</comment>
<comment type="catalytic activity">
    <molecule>Isoform 1</molecule>
    <reaction evidence="6">
        <text>L-seryl-[protein] + UDP-N-acetyl-alpha-D-galactosamine = a 3-O-[N-acetyl-alpha-D-galactosaminyl]-L-seryl-[protein] + UDP + H(+)</text>
        <dbReference type="Rhea" id="RHEA:23956"/>
        <dbReference type="Rhea" id="RHEA-COMP:9863"/>
        <dbReference type="Rhea" id="RHEA-COMP:12788"/>
        <dbReference type="ChEBI" id="CHEBI:15378"/>
        <dbReference type="ChEBI" id="CHEBI:29999"/>
        <dbReference type="ChEBI" id="CHEBI:53604"/>
        <dbReference type="ChEBI" id="CHEBI:58223"/>
        <dbReference type="ChEBI" id="CHEBI:67138"/>
        <dbReference type="EC" id="2.4.1.41"/>
    </reaction>
    <physiologicalReaction direction="left-to-right" evidence="13">
        <dbReference type="Rhea" id="RHEA:23957"/>
    </physiologicalReaction>
</comment>
<comment type="catalytic activity">
    <molecule>Isoform 1</molecule>
    <reaction evidence="6 7">
        <text>L-threonyl-[protein] + UDP-N-acetyl-alpha-D-galactosamine = a 3-O-[N-acetyl-alpha-D-galactosaminyl]-L-threonyl-[protein] + UDP + H(+)</text>
        <dbReference type="Rhea" id="RHEA:52424"/>
        <dbReference type="Rhea" id="RHEA-COMP:11060"/>
        <dbReference type="Rhea" id="RHEA-COMP:11689"/>
        <dbReference type="ChEBI" id="CHEBI:15378"/>
        <dbReference type="ChEBI" id="CHEBI:30013"/>
        <dbReference type="ChEBI" id="CHEBI:58223"/>
        <dbReference type="ChEBI" id="CHEBI:67138"/>
        <dbReference type="ChEBI" id="CHEBI:87075"/>
        <dbReference type="EC" id="2.4.1.41"/>
    </reaction>
    <physiologicalReaction direction="left-to-right" evidence="13 14">
        <dbReference type="Rhea" id="RHEA:52425"/>
    </physiologicalReaction>
</comment>
<comment type="catalytic activity">
    <molecule>Isoform 3</molecule>
    <reaction evidence="7">
        <text>L-threonyl-[protein] + UDP-N-acetyl-alpha-D-galactosamine = a 3-O-[N-acetyl-alpha-D-galactosaminyl]-L-threonyl-[protein] + UDP + H(+)</text>
        <dbReference type="Rhea" id="RHEA:52424"/>
        <dbReference type="Rhea" id="RHEA-COMP:11060"/>
        <dbReference type="Rhea" id="RHEA-COMP:11689"/>
        <dbReference type="ChEBI" id="CHEBI:15378"/>
        <dbReference type="ChEBI" id="CHEBI:30013"/>
        <dbReference type="ChEBI" id="CHEBI:58223"/>
        <dbReference type="ChEBI" id="CHEBI:67138"/>
        <dbReference type="ChEBI" id="CHEBI:87075"/>
        <dbReference type="EC" id="2.4.1.41"/>
    </reaction>
    <physiologicalReaction direction="left-to-right" evidence="14">
        <dbReference type="Rhea" id="RHEA:52425"/>
    </physiologicalReaction>
</comment>
<comment type="cofactor">
    <cofactor evidence="2">
        <name>Mn(2+)</name>
        <dbReference type="ChEBI" id="CHEBI:29035"/>
    </cofactor>
</comment>
<comment type="biophysicochemical properties">
    <molecule>Isoform 1</molecule>
    <kinetics>
        <KM evidence="7">111 uM for MUC5AC</KM>
        <KM evidence="7">263 uM for MUC5AC-3</KM>
        <KM evidence="7">353 uM for MUC5AC-13</KM>
        <KM evidence="7">2000 uM for MUC5AC-3,13</KM>
        <KM evidence="6">0.11 mM for MUC1</KM>
        <KM evidence="6">0.046 mM for MUC7</KM>
        <KM evidence="6">1.33 mM for SDC3 (SDC106)</KM>
        <KM evidence="6">0.63 mM for SDC3 (SDC155)</KM>
        <KM evidence="6">0.38 mM for SDC3 (SDC165)</KM>
        <KM evidence="6">0.07 mM for SDC3 (SDC284)</KM>
        <Vmax evidence="6">0.65 nmol/min/ug enzyme toward MUC1</Vmax>
        <Vmax evidence="6">0.41 nmol/min/ug enzyme toward MUC7</Vmax>
        <Vmax evidence="6">2.0 nmol/min/ug enzyme toward SDC3 (SDC106)</Vmax>
        <Vmax evidence="6">1.17 nmol/min/ug enzyme toward SDC3 (SDC155)</Vmax>
        <Vmax evidence="6">0.711 nmol/min/ug enzyme toward SDC3 (SDC165)</Vmax>
        <Vmax evidence="6">0.212 nmol/min/ug enzyme toward SDC3 (SDC284)</Vmax>
    </kinetics>
</comment>
<comment type="biophysicochemical properties">
    <molecule>Isoform 3</molecule>
    <kinetics>
        <KM evidence="7">67 uM for MUC5AC</KM>
        <KM evidence="7">35 uM for MUC5AC-3</KM>
        <KM evidence="7">130 uM for MUC5AC-13</KM>
        <KM evidence="7">2000 uM for MUC5AC-3,13</KM>
    </kinetics>
</comment>
<comment type="pathway">
    <text evidence="13 14">Protein modification; protein glycosylation.</text>
</comment>
<comment type="subcellular location">
    <subcellularLocation>
        <location evidence="1">Golgi apparatus membrane</location>
        <topology evidence="1">Single-pass type II membrane protein</topology>
    </subcellularLocation>
</comment>
<comment type="alternative products">
    <event type="alternative splicing"/>
    <isoform>
        <id>Q8IUC8-1</id>
        <name>1</name>
        <sequence type="displayed"/>
    </isoform>
    <isoform>
        <id>Q8IUC8-2</id>
        <name>2</name>
        <sequence type="described" ref="VSP_011218 VSP_011219"/>
    </isoform>
    <isoform>
        <id>Q8IUC8-3</id>
        <name>3</name>
        <sequence type="described" ref="VSP_054411"/>
    </isoform>
</comment>
<comment type="tissue specificity">
    <text evidence="6">Specifically expressed in neuronal cells. Expressed in fetal brain, whole adult brain, cerebral cortex and cerebellum. Not expressed in other tissues tested.</text>
</comment>
<comment type="domain">
    <text evidence="1">There are two conserved domains in the glycosyltransferase region: the N-terminal domain (domain A, also called GT1 motif), which is probably involved in manganese coordination and substrate binding and the C-terminal domain (domain B, also called Gal/GalNAc-T motif), which is probably involved in catalytic reaction and UDP-Gal binding.</text>
</comment>
<comment type="domain">
    <text evidence="1">The ricin B-type lectin domain binds to GalNAc and contributes to the glycopeptide specificity.</text>
</comment>
<comment type="similarity">
    <text evidence="12">Belongs to the glycosyltransferase 2 family. GalNAc-T subfamily.</text>
</comment>
<comment type="sequence caution" evidence="12">
    <conflict type="erroneous initiation">
        <sequence resource="EMBL-CDS" id="AAF19246"/>
    </conflict>
</comment>
<comment type="sequence caution" evidence="12">
    <conflict type="miscellaneous discrepancy">
        <sequence resource="EMBL-CDS" id="BAC85542"/>
    </conflict>
    <text>Chimera. Chimeric at the N-terminus.</text>
</comment>
<comment type="online information" name="Functional Glycomics Gateway - GTase">
    <link uri="http://www.functionalglycomics.org/glycomics/molecule/jsp/glycoEnzyme/viewGlycoEnzyme.jsp?gbpId=gt_hum_496"/>
    <text>Polypeptide N-acetylgalactosaminyltransferase 13</text>
</comment>
<organism>
    <name type="scientific">Homo sapiens</name>
    <name type="common">Human</name>
    <dbReference type="NCBI Taxonomy" id="9606"/>
    <lineage>
        <taxon>Eukaryota</taxon>
        <taxon>Metazoa</taxon>
        <taxon>Chordata</taxon>
        <taxon>Craniata</taxon>
        <taxon>Vertebrata</taxon>
        <taxon>Euteleostomi</taxon>
        <taxon>Mammalia</taxon>
        <taxon>Eutheria</taxon>
        <taxon>Euarchontoglires</taxon>
        <taxon>Primates</taxon>
        <taxon>Haplorrhini</taxon>
        <taxon>Catarrhini</taxon>
        <taxon>Hominidae</taxon>
        <taxon>Homo</taxon>
    </lineage>
</organism>
<protein>
    <recommendedName>
        <fullName>Polypeptide N-acetylgalactosaminyltransferase 13</fullName>
        <ecNumber evidence="6 7">2.4.1.41</ecNumber>
    </recommendedName>
    <alternativeName>
        <fullName>Polypeptide GalNAc transferase 13</fullName>
        <shortName evidence="11">GalNAc-T13</shortName>
        <shortName>pp-GaNTase 13</shortName>
    </alternativeName>
    <alternativeName>
        <fullName>Protein-UDP acetylgalactosaminyltransferase 13</fullName>
    </alternativeName>
    <alternativeName>
        <fullName evidence="8">UDP-GalNAc:polypeptide N-acetylgalactosaminyltransferase 13</fullName>
    </alternativeName>
</protein>
<feature type="chain" id="PRO_0000059130" description="Polypeptide N-acetylgalactosaminyltransferase 13">
    <location>
        <begin position="1"/>
        <end position="556"/>
    </location>
</feature>
<feature type="topological domain" description="Cytoplasmic" evidence="4">
    <location>
        <begin position="1"/>
        <end position="4"/>
    </location>
</feature>
<feature type="transmembrane region" description="Helical; Signal-anchor for type II membrane protein" evidence="4">
    <location>
        <begin position="5"/>
        <end position="27"/>
    </location>
</feature>
<feature type="topological domain" description="Lumenal" evidence="4">
    <location>
        <begin position="28"/>
        <end position="556"/>
    </location>
</feature>
<feature type="domain" description="Ricin B-type lectin" evidence="5">
    <location>
        <begin position="428"/>
        <end position="550"/>
    </location>
</feature>
<feature type="region of interest" description="Catalytic subdomain A">
    <location>
        <begin position="114"/>
        <end position="224"/>
    </location>
</feature>
<feature type="region of interest" description="Catalytic subdomain B">
    <location>
        <begin position="284"/>
        <end position="346"/>
    </location>
</feature>
<feature type="binding site" evidence="2">
    <location>
        <position position="155"/>
    </location>
    <ligand>
        <name>substrate</name>
    </ligand>
</feature>
<feature type="binding site" evidence="2">
    <location>
        <position position="185"/>
    </location>
    <ligand>
        <name>substrate</name>
    </ligand>
</feature>
<feature type="binding site" evidence="2">
    <location>
        <position position="208"/>
    </location>
    <ligand>
        <name>Mn(2+)</name>
        <dbReference type="ChEBI" id="CHEBI:29035"/>
    </ligand>
</feature>
<feature type="binding site" evidence="2">
    <location>
        <position position="210"/>
    </location>
    <ligand>
        <name>Mn(2+)</name>
        <dbReference type="ChEBI" id="CHEBI:29035"/>
    </ligand>
</feature>
<feature type="binding site" evidence="2">
    <location>
        <position position="315"/>
    </location>
    <ligand>
        <name>substrate</name>
    </ligand>
</feature>
<feature type="binding site" evidence="2">
    <location>
        <position position="343"/>
    </location>
    <ligand>
        <name>Mn(2+)</name>
        <dbReference type="ChEBI" id="CHEBI:29035"/>
    </ligand>
</feature>
<feature type="binding site" evidence="2">
    <location>
        <position position="346"/>
    </location>
    <ligand>
        <name>substrate</name>
    </ligand>
</feature>
<feature type="binding site" evidence="2">
    <location>
        <position position="351"/>
    </location>
    <ligand>
        <name>substrate</name>
    </ligand>
</feature>
<feature type="glycosylation site" description="N-linked (GlcNAc...) asparagine" evidence="4">
    <location>
        <position position="94"/>
    </location>
</feature>
<feature type="glycosylation site" description="N-linked (GlcNAc...) asparagine" evidence="4">
    <location>
        <position position="116"/>
    </location>
</feature>
<feature type="glycosylation site" description="N-linked (GlcNAc...) asparagine" evidence="4">
    <location>
        <position position="551"/>
    </location>
</feature>
<feature type="disulfide bond" evidence="5">
    <location>
        <begin position="105"/>
        <end position="338"/>
    </location>
</feature>
<feature type="disulfide bond" evidence="5">
    <location>
        <begin position="329"/>
        <end position="407"/>
    </location>
</feature>
<feature type="disulfide bond" evidence="5">
    <location>
        <begin position="441"/>
        <end position="458"/>
    </location>
</feature>
<feature type="disulfide bond" evidence="5">
    <location>
        <begin position="481"/>
        <end position="496"/>
    </location>
</feature>
<feature type="disulfide bond" evidence="5">
    <location>
        <begin position="522"/>
        <end position="539"/>
    </location>
</feature>
<feature type="splice variant" id="VSP_011218" description="In isoform 2." evidence="9">
    <original>VFSYTADKEIRTDDLCLDVSR</original>
    <variation>TQWTCNHVKMPPYERKSVMGI</variation>
    <location>
        <begin position="466"/>
        <end position="486"/>
    </location>
</feature>
<feature type="splice variant" id="VSP_011219" description="In isoform 2." evidence="9">
    <location>
        <begin position="487"/>
        <end position="556"/>
    </location>
</feature>
<feature type="splice variant" id="VSP_054411" description="In isoform 3." evidence="10">
    <original>RLTLRHVNSNQCLDEPSEEDKMVPTMQDCSGSRSQQWLLRNMTLGT</original>
    <variation>SCLSVNKVADGSQHPTVETCNDSTLQKWLLRNYTRMEIFRNIFGNSTDYIL</variation>
    <location>
        <begin position="511"/>
        <end position="556"/>
    </location>
</feature>
<feature type="sequence variant" id="VAR_049242" description="In dbSNP:rs34086479.">
    <original>E</original>
    <variation>D</variation>
    <location>
        <position position="59"/>
    </location>
</feature>
<feature type="sequence conflict" description="In Ref. 1; BAC54545." evidence="12" ref="1">
    <original>F</original>
    <variation>S</variation>
    <location>
        <position position="4"/>
    </location>
</feature>
<keyword id="KW-0025">Alternative splicing</keyword>
<keyword id="KW-1015">Disulfide bond</keyword>
<keyword id="KW-0325">Glycoprotein</keyword>
<keyword id="KW-0328">Glycosyltransferase</keyword>
<keyword id="KW-0333">Golgi apparatus</keyword>
<keyword id="KW-0430">Lectin</keyword>
<keyword id="KW-0464">Manganese</keyword>
<keyword id="KW-0472">Membrane</keyword>
<keyword id="KW-0479">Metal-binding</keyword>
<keyword id="KW-1267">Proteomics identification</keyword>
<keyword id="KW-1185">Reference proteome</keyword>
<keyword id="KW-0735">Signal-anchor</keyword>
<keyword id="KW-0808">Transferase</keyword>
<keyword id="KW-0812">Transmembrane</keyword>
<keyword id="KW-1133">Transmembrane helix</keyword>
<evidence type="ECO:0000250" key="1"/>
<evidence type="ECO:0000250" key="2">
    <source>
        <dbReference type="UniProtKB" id="Q10471"/>
    </source>
</evidence>
<evidence type="ECO:0000250" key="3">
    <source>
        <dbReference type="UniProtKB" id="Q8CF93"/>
    </source>
</evidence>
<evidence type="ECO:0000255" key="4"/>
<evidence type="ECO:0000255" key="5">
    <source>
        <dbReference type="PROSITE-ProRule" id="PRU00174"/>
    </source>
</evidence>
<evidence type="ECO:0000269" key="6">
    <source>
    </source>
</evidence>
<evidence type="ECO:0000269" key="7">
    <source>
    </source>
</evidence>
<evidence type="ECO:0000303" key="8">
    <source>
    </source>
</evidence>
<evidence type="ECO:0000303" key="9">
    <source>
    </source>
</evidence>
<evidence type="ECO:0000303" key="10">
    <source>
    </source>
</evidence>
<evidence type="ECO:0000303" key="11">
    <source>
    </source>
</evidence>
<evidence type="ECO:0000305" key="12"/>
<evidence type="ECO:0000305" key="13">
    <source>
    </source>
</evidence>
<evidence type="ECO:0000305" key="14">
    <source>
    </source>
</evidence>
<name>GLT13_HUMAN</name>
<accession>Q8IUC8</accession>
<accession>Q08ER7</accession>
<accession>Q68VI8</accession>
<accession>Q6ZWG1</accession>
<accession>Q96PX0</accession>
<accession>Q9UIE5</accession>
<reference key="1">
    <citation type="journal article" date="2003" name="J. Biol. Chem.">
        <title>Cloning and characterization of a new human UDP-N-acetyl-alpha-D-galactosamine:polypeptide N-acetylgalactosaminyltransferase, designated pp-GalNAc-T13, that is specifically expressed in neurons and synthesizes GalNAc alpha-serine/threonine antigen.</title>
        <authorList>
            <person name="Zhang Y."/>
            <person name="Iwasaki H."/>
            <person name="Wang H."/>
            <person name="Kudo T."/>
            <person name="Kalka T.B."/>
            <person name="Hennet T."/>
            <person name="Kubota T."/>
            <person name="Cheng L."/>
            <person name="Inaba N."/>
            <person name="Gotoh M."/>
            <person name="Togayachi A."/>
            <person name="Guo J.-M."/>
            <person name="Hisatomi H."/>
            <person name="Nakajima K."/>
            <person name="Nishihara S."/>
            <person name="Nakamura M."/>
            <person name="Marth J.D."/>
            <person name="Narimatsu H."/>
        </authorList>
    </citation>
    <scope>NUCLEOTIDE SEQUENCE [MRNA] (ISOFORM 1)</scope>
    <scope>FUNCTION (ISOFORM 1)</scope>
    <scope>CATALYTIC ACTIVITY (ISOFORM 1)</scope>
    <scope>BIOPHYSICOCHEMICAL PROPERTIES (ISOFORM 1)</scope>
    <scope>PATHWAY</scope>
    <scope>TISSUE SPECIFICITY</scope>
</reference>
<reference key="2">
    <citation type="journal article" date="2014" name="Nat. Commun.">
        <title>Protein interaction network of alternatively spliced isoforms from brain links genetic risk factors for autism.</title>
        <authorList>
            <person name="Corominas R."/>
            <person name="Yang X."/>
            <person name="Lin G.N."/>
            <person name="Kang S."/>
            <person name="Shen Y."/>
            <person name="Ghamsari L."/>
            <person name="Broly M."/>
            <person name="Rodriguez M."/>
            <person name="Tam S."/>
            <person name="Wanamaker S.A."/>
            <person name="Fan C."/>
            <person name="Yi S."/>
            <person name="Tasan M."/>
            <person name="Lemmens I."/>
            <person name="Kuang X."/>
            <person name="Zhao N."/>
            <person name="Malhotra D."/>
            <person name="Michaelson J.J."/>
            <person name="Vacic V."/>
            <person name="Calderwood M.A."/>
            <person name="Roth F.P."/>
            <person name="Tavernier J."/>
            <person name="Horvath S."/>
            <person name="Salehi-Ashtiani K."/>
            <person name="Korkin D."/>
            <person name="Sebat J."/>
            <person name="Hill D.E."/>
            <person name="Hao T."/>
            <person name="Vidal M."/>
            <person name="Iakoucheva L.M."/>
        </authorList>
    </citation>
    <scope>NUCLEOTIDE SEQUENCE [MRNA] (ISOFORM 1)</scope>
    <source>
        <tissue>Fetal brain</tissue>
    </source>
</reference>
<reference key="3">
    <citation type="submission" date="2002-08" db="EMBL/GenBank/DDBJ databases">
        <title>polypetide GalNAc-transferase 13, ppGalNAc-T13, GALNT13.</title>
        <authorList>
            <person name="Bennett E.P."/>
        </authorList>
    </citation>
    <scope>NUCLEOTIDE SEQUENCE [MRNA] (ISOFORM 1)</scope>
</reference>
<reference key="4">
    <citation type="journal article" date="2005" name="Nature">
        <title>Generation and annotation of the DNA sequences of human chromosomes 2 and 4.</title>
        <authorList>
            <person name="Hillier L.W."/>
            <person name="Graves T.A."/>
            <person name="Fulton R.S."/>
            <person name="Fulton L.A."/>
            <person name="Pepin K.H."/>
            <person name="Minx P."/>
            <person name="Wagner-McPherson C."/>
            <person name="Layman D."/>
            <person name="Wylie K."/>
            <person name="Sekhon M."/>
            <person name="Becker M.C."/>
            <person name="Fewell G.A."/>
            <person name="Delehaunty K.D."/>
            <person name="Miner T.L."/>
            <person name="Nash W.E."/>
            <person name="Kremitzki C."/>
            <person name="Oddy L."/>
            <person name="Du H."/>
            <person name="Sun H."/>
            <person name="Bradshaw-Cordum H."/>
            <person name="Ali J."/>
            <person name="Carter J."/>
            <person name="Cordes M."/>
            <person name="Harris A."/>
            <person name="Isak A."/>
            <person name="van Brunt A."/>
            <person name="Nguyen C."/>
            <person name="Du F."/>
            <person name="Courtney L."/>
            <person name="Kalicki J."/>
            <person name="Ozersky P."/>
            <person name="Abbott S."/>
            <person name="Armstrong J."/>
            <person name="Belter E.A."/>
            <person name="Caruso L."/>
            <person name="Cedroni M."/>
            <person name="Cotton M."/>
            <person name="Davidson T."/>
            <person name="Desai A."/>
            <person name="Elliott G."/>
            <person name="Erb T."/>
            <person name="Fronick C."/>
            <person name="Gaige T."/>
            <person name="Haakenson W."/>
            <person name="Haglund K."/>
            <person name="Holmes A."/>
            <person name="Harkins R."/>
            <person name="Kim K."/>
            <person name="Kruchowski S.S."/>
            <person name="Strong C.M."/>
            <person name="Grewal N."/>
            <person name="Goyea E."/>
            <person name="Hou S."/>
            <person name="Levy A."/>
            <person name="Martinka S."/>
            <person name="Mead K."/>
            <person name="McLellan M.D."/>
            <person name="Meyer R."/>
            <person name="Randall-Maher J."/>
            <person name="Tomlinson C."/>
            <person name="Dauphin-Kohlberg S."/>
            <person name="Kozlowicz-Reilly A."/>
            <person name="Shah N."/>
            <person name="Swearengen-Shahid S."/>
            <person name="Snider J."/>
            <person name="Strong J.T."/>
            <person name="Thompson J."/>
            <person name="Yoakum M."/>
            <person name="Leonard S."/>
            <person name="Pearman C."/>
            <person name="Trani L."/>
            <person name="Radionenko M."/>
            <person name="Waligorski J.E."/>
            <person name="Wang C."/>
            <person name="Rock S.M."/>
            <person name="Tin-Wollam A.-M."/>
            <person name="Maupin R."/>
            <person name="Latreille P."/>
            <person name="Wendl M.C."/>
            <person name="Yang S.-P."/>
            <person name="Pohl C."/>
            <person name="Wallis J.W."/>
            <person name="Spieth J."/>
            <person name="Bieri T.A."/>
            <person name="Berkowicz N."/>
            <person name="Nelson J.O."/>
            <person name="Osborne J."/>
            <person name="Ding L."/>
            <person name="Meyer R."/>
            <person name="Sabo A."/>
            <person name="Shotland Y."/>
            <person name="Sinha P."/>
            <person name="Wohldmann P.E."/>
            <person name="Cook L.L."/>
            <person name="Hickenbotham M.T."/>
            <person name="Eldred J."/>
            <person name="Williams D."/>
            <person name="Jones T.A."/>
            <person name="She X."/>
            <person name="Ciccarelli F.D."/>
            <person name="Izaurralde E."/>
            <person name="Taylor J."/>
            <person name="Schmutz J."/>
            <person name="Myers R.M."/>
            <person name="Cox D.R."/>
            <person name="Huang X."/>
            <person name="McPherson J.D."/>
            <person name="Mardis E.R."/>
            <person name="Clifton S.W."/>
            <person name="Warren W.C."/>
            <person name="Chinwalla A.T."/>
            <person name="Eddy S.R."/>
            <person name="Marra M.A."/>
            <person name="Ovcharenko I."/>
            <person name="Furey T.S."/>
            <person name="Miller W."/>
            <person name="Eichler E.E."/>
            <person name="Bork P."/>
            <person name="Suyama M."/>
            <person name="Torrents D."/>
            <person name="Waterston R.H."/>
            <person name="Wilson R.K."/>
        </authorList>
    </citation>
    <scope>NUCLEOTIDE SEQUENCE [LARGE SCALE GENOMIC DNA]</scope>
</reference>
<reference key="5">
    <citation type="submission" date="2005-09" db="EMBL/GenBank/DDBJ databases">
        <authorList>
            <person name="Mural R.J."/>
            <person name="Istrail S."/>
            <person name="Sutton G."/>
            <person name="Florea L."/>
            <person name="Halpern A.L."/>
            <person name="Mobarry C.M."/>
            <person name="Lippert R."/>
            <person name="Walenz B."/>
            <person name="Shatkay H."/>
            <person name="Dew I."/>
            <person name="Miller J.R."/>
            <person name="Flanigan M.J."/>
            <person name="Edwards N.J."/>
            <person name="Bolanos R."/>
            <person name="Fasulo D."/>
            <person name="Halldorsson B.V."/>
            <person name="Hannenhalli S."/>
            <person name="Turner R."/>
            <person name="Yooseph S."/>
            <person name="Lu F."/>
            <person name="Nusskern D.R."/>
            <person name="Shue B.C."/>
            <person name="Zheng X.H."/>
            <person name="Zhong F."/>
            <person name="Delcher A.L."/>
            <person name="Huson D.H."/>
            <person name="Kravitz S.A."/>
            <person name="Mouchard L."/>
            <person name="Reinert K."/>
            <person name="Remington K.A."/>
            <person name="Clark A.G."/>
            <person name="Waterman M.S."/>
            <person name="Eichler E.E."/>
            <person name="Adams M.D."/>
            <person name="Hunkapiller M.W."/>
            <person name="Myers E.W."/>
            <person name="Venter J.C."/>
        </authorList>
    </citation>
    <scope>NUCLEOTIDE SEQUENCE [LARGE SCALE GENOMIC DNA]</scope>
</reference>
<reference key="6">
    <citation type="journal article" date="2004" name="Genome Res.">
        <title>The status, quality, and expansion of the NIH full-length cDNA project: the Mammalian Gene Collection (MGC).</title>
        <authorList>
            <consortium name="The MGC Project Team"/>
        </authorList>
    </citation>
    <scope>NUCLEOTIDE SEQUENCE [LARGE SCALE MRNA] (ISOFORMS 1 AND 3)</scope>
</reference>
<reference key="7">
    <citation type="journal article" date="2001" name="DNA Res.">
        <title>Prediction of the coding sequences of unidentified human genes. XXI. The complete sequences of 60 new cDNA clones from brain which code for large proteins.</title>
        <authorList>
            <person name="Nagase T."/>
            <person name="Kikuno R."/>
            <person name="Ohara O."/>
        </authorList>
    </citation>
    <scope>NUCLEOTIDE SEQUENCE [LARGE SCALE MRNA] OF 41-556 (ISOFORM 1)</scope>
    <source>
        <tissue>Brain</tissue>
    </source>
</reference>
<reference key="8">
    <citation type="journal article" date="2004" name="Nat. Genet.">
        <title>Complete sequencing and characterization of 21,243 full-length human cDNAs.</title>
        <authorList>
            <person name="Ota T."/>
            <person name="Suzuki Y."/>
            <person name="Nishikawa T."/>
            <person name="Otsuki T."/>
            <person name="Sugiyama T."/>
            <person name="Irie R."/>
            <person name="Wakamatsu A."/>
            <person name="Hayashi K."/>
            <person name="Sato H."/>
            <person name="Nagai K."/>
            <person name="Kimura K."/>
            <person name="Makita H."/>
            <person name="Sekine M."/>
            <person name="Obayashi M."/>
            <person name="Nishi T."/>
            <person name="Shibahara T."/>
            <person name="Tanaka T."/>
            <person name="Ishii S."/>
            <person name="Yamamoto J."/>
            <person name="Saito K."/>
            <person name="Kawai Y."/>
            <person name="Isono Y."/>
            <person name="Nakamura Y."/>
            <person name="Nagahari K."/>
            <person name="Murakami K."/>
            <person name="Yasuda T."/>
            <person name="Iwayanagi T."/>
            <person name="Wagatsuma M."/>
            <person name="Shiratori A."/>
            <person name="Sudo H."/>
            <person name="Hosoiri T."/>
            <person name="Kaku Y."/>
            <person name="Kodaira H."/>
            <person name="Kondo H."/>
            <person name="Sugawara M."/>
            <person name="Takahashi M."/>
            <person name="Kanda K."/>
            <person name="Yokoi T."/>
            <person name="Furuya T."/>
            <person name="Kikkawa E."/>
            <person name="Omura Y."/>
            <person name="Abe K."/>
            <person name="Kamihara K."/>
            <person name="Katsuta N."/>
            <person name="Sato K."/>
            <person name="Tanikawa M."/>
            <person name="Yamazaki M."/>
            <person name="Ninomiya K."/>
            <person name="Ishibashi T."/>
            <person name="Yamashita H."/>
            <person name="Murakawa K."/>
            <person name="Fujimori K."/>
            <person name="Tanai H."/>
            <person name="Kimata M."/>
            <person name="Watanabe M."/>
            <person name="Hiraoka S."/>
            <person name="Chiba Y."/>
            <person name="Ishida S."/>
            <person name="Ono Y."/>
            <person name="Takiguchi S."/>
            <person name="Watanabe S."/>
            <person name="Yosida M."/>
            <person name="Hotuta T."/>
            <person name="Kusano J."/>
            <person name="Kanehori K."/>
            <person name="Takahashi-Fujii A."/>
            <person name="Hara H."/>
            <person name="Tanase T.-O."/>
            <person name="Nomura Y."/>
            <person name="Togiya S."/>
            <person name="Komai F."/>
            <person name="Hara R."/>
            <person name="Takeuchi K."/>
            <person name="Arita M."/>
            <person name="Imose N."/>
            <person name="Musashino K."/>
            <person name="Yuuki H."/>
            <person name="Oshima A."/>
            <person name="Sasaki N."/>
            <person name="Aotsuka S."/>
            <person name="Yoshikawa Y."/>
            <person name="Matsunawa H."/>
            <person name="Ichihara T."/>
            <person name="Shiohata N."/>
            <person name="Sano S."/>
            <person name="Moriya S."/>
            <person name="Momiyama H."/>
            <person name="Satoh N."/>
            <person name="Takami S."/>
            <person name="Terashima Y."/>
            <person name="Suzuki O."/>
            <person name="Nakagawa S."/>
            <person name="Senoh A."/>
            <person name="Mizoguchi H."/>
            <person name="Goto Y."/>
            <person name="Shimizu F."/>
            <person name="Wakebe H."/>
            <person name="Hishigaki H."/>
            <person name="Watanabe T."/>
            <person name="Sugiyama A."/>
            <person name="Takemoto M."/>
            <person name="Kawakami B."/>
            <person name="Yamazaki M."/>
            <person name="Watanabe K."/>
            <person name="Kumagai A."/>
            <person name="Itakura S."/>
            <person name="Fukuzumi Y."/>
            <person name="Fujimori Y."/>
            <person name="Komiyama M."/>
            <person name="Tashiro H."/>
            <person name="Tanigami A."/>
            <person name="Fujiwara T."/>
            <person name="Ono T."/>
            <person name="Yamada K."/>
            <person name="Fujii Y."/>
            <person name="Ozaki K."/>
            <person name="Hirao M."/>
            <person name="Ohmori Y."/>
            <person name="Kawabata A."/>
            <person name="Hikiji T."/>
            <person name="Kobatake N."/>
            <person name="Inagaki H."/>
            <person name="Ikema Y."/>
            <person name="Okamoto S."/>
            <person name="Okitani R."/>
            <person name="Kawakami T."/>
            <person name="Noguchi S."/>
            <person name="Itoh T."/>
            <person name="Shigeta K."/>
            <person name="Senba T."/>
            <person name="Matsumura K."/>
            <person name="Nakajima Y."/>
            <person name="Mizuno T."/>
            <person name="Morinaga M."/>
            <person name="Sasaki M."/>
            <person name="Togashi T."/>
            <person name="Oyama M."/>
            <person name="Hata H."/>
            <person name="Watanabe M."/>
            <person name="Komatsu T."/>
            <person name="Mizushima-Sugano J."/>
            <person name="Satoh T."/>
            <person name="Shirai Y."/>
            <person name="Takahashi Y."/>
            <person name="Nakagawa K."/>
            <person name="Okumura K."/>
            <person name="Nagase T."/>
            <person name="Nomura N."/>
            <person name="Kikuchi H."/>
            <person name="Masuho Y."/>
            <person name="Yamashita R."/>
            <person name="Nakai K."/>
            <person name="Yada T."/>
            <person name="Nakamura Y."/>
            <person name="Ohara O."/>
            <person name="Isogai T."/>
            <person name="Sugano S."/>
        </authorList>
    </citation>
    <scope>NUCLEOTIDE SEQUENCE [LARGE SCALE MRNA] OF 262-556 (ISOFORM 2)</scope>
    <source>
        <tissue>Cerebellum</tissue>
    </source>
</reference>
<reference key="9">
    <citation type="journal article" date="2012" name="Glycobiology">
        <title>UDP-N-acetyl-alpha-D-galactosamine:polypeptide N-acetylgalactosaminyltransferases: completion of the family tree.</title>
        <authorList>
            <person name="Raman J."/>
            <person name="Guan Y."/>
            <person name="Perrine C.L."/>
            <person name="Gerken T.A."/>
            <person name="Tabak L.A."/>
        </authorList>
    </citation>
    <scope>FUNCTION (ISOFORMS 1 AND 3)</scope>
    <scope>CATALYTIC ACTIVITY (ISOFORMS 1 AND 3)</scope>
    <scope>BIOPHYSICOCHEMICAL PROPERTIES (ISOFORMS 1 AND 3)</scope>
    <scope>PATHWAY</scope>
</reference>
<proteinExistence type="evidence at protein level"/>
<sequence length="556" mass="64051">MRRFVYCKVVLATSLMWVLVDVFLLLYFSECNKCDDKKERSLLPALRAVISRNQEGPGEMGKAVLIPKDDQEKMKELFKINQFNLMASDLIALNRSLPDVRLEGCKTKVYPDELPNTSVVIVFHNEAWSTLLRTVYSVINRSPHYLLSEVILVDDASERDFLKLTLENYVKNLEVPVKIIRMEERSGLIRARLRGAAASKGQVITFLDAHCECTLGWLEPLLARIKEDRKTVVCPIIDVISDDTFEYMAGSDMTYGGFNWKLNFRWYPVPQREMDRRKGDRTLPVRTPTMAGGLFSIDRNYFEEIGTYDAGMDIWGGENLEMSFRIWQCGGSLEIVTCSHVGHVFRKATPYTFPGGTGHVINKNNRRLAEVWMDEFKDFFYIISPGVVKVDYGDVSVRKTLRENLKCKPFSWYLENIYPDSQIPRRYYSLGEIRNVETNQCLDNMGRKENEKVGIFNCHGMGGNQVFSYTADKEIRTDDLCLDVSRLNGPVIMLKCHHMRGNQLWEYDAERLTLRHVNSNQCLDEPSEEDKMVPTMQDCSGSRSQQWLLRNMTLGT</sequence>
<dbReference type="EC" id="2.4.1.41" evidence="6 7"/>
<dbReference type="EMBL" id="AB078142">
    <property type="protein sequence ID" value="BAC54545.1"/>
    <property type="molecule type" value="mRNA"/>
</dbReference>
<dbReference type="EMBL" id="KJ534843">
    <property type="protein sequence ID" value="AHW56483.1"/>
    <property type="molecule type" value="mRNA"/>
</dbReference>
<dbReference type="EMBL" id="AJ505991">
    <property type="protein sequence ID" value="CAD44533.2"/>
    <property type="molecule type" value="mRNA"/>
</dbReference>
<dbReference type="EMBL" id="AC008166">
    <property type="status" value="NOT_ANNOTATED_CDS"/>
    <property type="molecule type" value="Genomic_DNA"/>
</dbReference>
<dbReference type="EMBL" id="AC009227">
    <property type="protein sequence ID" value="AAF19246.1"/>
    <property type="status" value="ALT_INIT"/>
    <property type="molecule type" value="Genomic_DNA"/>
</dbReference>
<dbReference type="EMBL" id="AC009297">
    <property type="status" value="NOT_ANNOTATED_CDS"/>
    <property type="molecule type" value="Genomic_DNA"/>
</dbReference>
<dbReference type="EMBL" id="AC092584">
    <property type="status" value="NOT_ANNOTATED_CDS"/>
    <property type="molecule type" value="Genomic_DNA"/>
</dbReference>
<dbReference type="EMBL" id="AC092589">
    <property type="status" value="NOT_ANNOTATED_CDS"/>
    <property type="molecule type" value="Genomic_DNA"/>
</dbReference>
<dbReference type="EMBL" id="AC133107">
    <property type="status" value="NOT_ANNOTATED_CDS"/>
    <property type="molecule type" value="Genomic_DNA"/>
</dbReference>
<dbReference type="EMBL" id="CH471058">
    <property type="protein sequence ID" value="EAX11464.1"/>
    <property type="molecule type" value="Genomic_DNA"/>
</dbReference>
<dbReference type="EMBL" id="CH471058">
    <property type="protein sequence ID" value="EAX11465.1"/>
    <property type="molecule type" value="Genomic_DNA"/>
</dbReference>
<dbReference type="EMBL" id="BC101031">
    <property type="protein sequence ID" value="AAI01032.1"/>
    <property type="molecule type" value="mRNA"/>
</dbReference>
<dbReference type="EMBL" id="BC101032">
    <property type="protein sequence ID" value="AAI01033.1"/>
    <property type="molecule type" value="mRNA"/>
</dbReference>
<dbReference type="EMBL" id="BC101033">
    <property type="protein sequence ID" value="AAI01034.1"/>
    <property type="molecule type" value="mRNA"/>
</dbReference>
<dbReference type="EMBL" id="BC101034">
    <property type="protein sequence ID" value="AAI01035.1"/>
    <property type="molecule type" value="mRNA"/>
</dbReference>
<dbReference type="EMBL" id="AB067505">
    <property type="protein sequence ID" value="BAB67811.1"/>
    <property type="molecule type" value="mRNA"/>
</dbReference>
<dbReference type="EMBL" id="AK123152">
    <property type="protein sequence ID" value="BAC85542.1"/>
    <property type="status" value="ALT_SEQ"/>
    <property type="molecule type" value="mRNA"/>
</dbReference>
<dbReference type="CCDS" id="CCDS2199.1">
    <molecule id="Q8IUC8-1"/>
</dbReference>
<dbReference type="CCDS" id="CCDS77472.1">
    <molecule id="Q8IUC8-3"/>
</dbReference>
<dbReference type="RefSeq" id="NP_001288556.1">
    <molecule id="Q8IUC8-3"/>
    <property type="nucleotide sequence ID" value="NM_001301627.2"/>
</dbReference>
<dbReference type="RefSeq" id="NP_001363321.1">
    <molecule id="Q8IUC8-1"/>
    <property type="nucleotide sequence ID" value="NM_001376392.1"/>
</dbReference>
<dbReference type="RefSeq" id="NP_001363323.1">
    <molecule id="Q8IUC8-1"/>
    <property type="nucleotide sequence ID" value="NM_001376394.1"/>
</dbReference>
<dbReference type="RefSeq" id="NP_001363327.1">
    <molecule id="Q8IUC8-1"/>
    <property type="nucleotide sequence ID" value="NM_001376398.1"/>
</dbReference>
<dbReference type="RefSeq" id="NP_001363329.1">
    <molecule id="Q8IUC8-1"/>
    <property type="nucleotide sequence ID" value="NM_001376400.1"/>
</dbReference>
<dbReference type="RefSeq" id="NP_001363330.1">
    <molecule id="Q8IUC8-1"/>
    <property type="nucleotide sequence ID" value="NM_001376401.1"/>
</dbReference>
<dbReference type="RefSeq" id="NP_001363331.1">
    <molecule id="Q8IUC8-1"/>
    <property type="nucleotide sequence ID" value="NM_001376402.1"/>
</dbReference>
<dbReference type="RefSeq" id="NP_001409809.1">
    <molecule id="Q8IUC8-1"/>
    <property type="nucleotide sequence ID" value="NM_001422880.1"/>
</dbReference>
<dbReference type="RefSeq" id="NP_001409810.1">
    <molecule id="Q8IUC8-1"/>
    <property type="nucleotide sequence ID" value="NM_001422881.1"/>
</dbReference>
<dbReference type="RefSeq" id="NP_001409811.1">
    <molecule id="Q8IUC8-1"/>
    <property type="nucleotide sequence ID" value="NM_001422882.1"/>
</dbReference>
<dbReference type="RefSeq" id="NP_443149.2">
    <molecule id="Q8IUC8-1"/>
    <property type="nucleotide sequence ID" value="NM_052917.4"/>
</dbReference>
<dbReference type="RefSeq" id="XP_016858749.1">
    <property type="nucleotide sequence ID" value="XM_017003260.1"/>
</dbReference>
<dbReference type="RefSeq" id="XP_016858750.1">
    <property type="nucleotide sequence ID" value="XM_017003261.1"/>
</dbReference>
<dbReference type="SMR" id="Q8IUC8"/>
<dbReference type="BioGRID" id="125365">
    <property type="interactions" value="40"/>
</dbReference>
<dbReference type="FunCoup" id="Q8IUC8">
    <property type="interactions" value="956"/>
</dbReference>
<dbReference type="IntAct" id="Q8IUC8">
    <property type="interactions" value="13"/>
</dbReference>
<dbReference type="STRING" id="9606.ENSP00000387239"/>
<dbReference type="BindingDB" id="Q8IUC8"/>
<dbReference type="ChEMBL" id="CHEMBL4523392"/>
<dbReference type="CAZy" id="CBM13">
    <property type="family name" value="Carbohydrate-Binding Module Family 13"/>
</dbReference>
<dbReference type="CAZy" id="GT27">
    <property type="family name" value="Glycosyltransferase Family 27"/>
</dbReference>
<dbReference type="GlyCosmos" id="Q8IUC8">
    <property type="glycosylation" value="3 sites, No reported glycans"/>
</dbReference>
<dbReference type="GlyGen" id="Q8IUC8">
    <property type="glycosylation" value="4 sites, 1 N-linked glycan (1 site), 1 O-linked glycan (1 site)"/>
</dbReference>
<dbReference type="iPTMnet" id="Q8IUC8"/>
<dbReference type="PhosphoSitePlus" id="Q8IUC8"/>
<dbReference type="BioMuta" id="GALNT13"/>
<dbReference type="DMDM" id="116242497"/>
<dbReference type="jPOST" id="Q8IUC8"/>
<dbReference type="MassIVE" id="Q8IUC8"/>
<dbReference type="PaxDb" id="9606-ENSP00000376570"/>
<dbReference type="PeptideAtlas" id="Q8IUC8"/>
<dbReference type="ProteomicsDB" id="58694"/>
<dbReference type="ProteomicsDB" id="70545">
    <molecule id="Q8IUC8-1"/>
</dbReference>
<dbReference type="ProteomicsDB" id="70546">
    <molecule id="Q8IUC8-2"/>
</dbReference>
<dbReference type="Antibodypedia" id="33696">
    <property type="antibodies" value="150 antibodies from 19 providers"/>
</dbReference>
<dbReference type="DNASU" id="114805"/>
<dbReference type="Ensembl" id="ENST00000392825.8">
    <molecule id="Q8IUC8-1"/>
    <property type="protein sequence ID" value="ENSP00000376570.3"/>
    <property type="gene ID" value="ENSG00000144278.15"/>
</dbReference>
<dbReference type="Ensembl" id="ENST00000409237.5">
    <molecule id="Q8IUC8-3"/>
    <property type="protein sequence ID" value="ENSP00000387239.1"/>
    <property type="gene ID" value="ENSG00000144278.15"/>
</dbReference>
<dbReference type="GeneID" id="114805"/>
<dbReference type="KEGG" id="hsa:114805"/>
<dbReference type="MANE-Select" id="ENST00000392825.8">
    <property type="protein sequence ID" value="ENSP00000376570.3"/>
    <property type="RefSeq nucleotide sequence ID" value="NM_052917.4"/>
    <property type="RefSeq protein sequence ID" value="NP_443149.2"/>
</dbReference>
<dbReference type="UCSC" id="uc002tyr.5">
    <molecule id="Q8IUC8-1"/>
    <property type="organism name" value="human"/>
</dbReference>
<dbReference type="AGR" id="HGNC:23242"/>
<dbReference type="CTD" id="114805"/>
<dbReference type="DisGeNET" id="114805"/>
<dbReference type="GeneCards" id="GALNT13"/>
<dbReference type="HGNC" id="HGNC:23242">
    <property type="gene designation" value="GALNT13"/>
</dbReference>
<dbReference type="HPA" id="ENSG00000144278">
    <property type="expression patterns" value="Tissue enhanced (brain, retina)"/>
</dbReference>
<dbReference type="MIM" id="608369">
    <property type="type" value="gene"/>
</dbReference>
<dbReference type="neXtProt" id="NX_Q8IUC8"/>
<dbReference type="OpenTargets" id="ENSG00000144278"/>
<dbReference type="PharmGKB" id="PA134887166"/>
<dbReference type="VEuPathDB" id="HostDB:ENSG00000144278"/>
<dbReference type="eggNOG" id="KOG3736">
    <property type="taxonomic scope" value="Eukaryota"/>
</dbReference>
<dbReference type="GeneTree" id="ENSGT00940000158904"/>
<dbReference type="HOGENOM" id="CLU_013477_0_1_1"/>
<dbReference type="InParanoid" id="Q8IUC8"/>
<dbReference type="OMA" id="PTVEACD"/>
<dbReference type="OrthoDB" id="330637at2759"/>
<dbReference type="PAN-GO" id="Q8IUC8">
    <property type="GO annotations" value="3 GO annotations based on evolutionary models"/>
</dbReference>
<dbReference type="PhylomeDB" id="Q8IUC8"/>
<dbReference type="TreeFam" id="TF313267"/>
<dbReference type="BRENDA" id="2.4.1.41">
    <property type="organism ID" value="2681"/>
</dbReference>
<dbReference type="PathwayCommons" id="Q8IUC8"/>
<dbReference type="Reactome" id="R-HSA-913709">
    <property type="pathway name" value="O-linked glycosylation of mucins"/>
</dbReference>
<dbReference type="SABIO-RK" id="Q8IUC8"/>
<dbReference type="SignaLink" id="Q8IUC8"/>
<dbReference type="UniPathway" id="UPA00378"/>
<dbReference type="BioGRID-ORCS" id="114805">
    <property type="hits" value="10 hits in 1141 CRISPR screens"/>
</dbReference>
<dbReference type="ChiTaRS" id="GALNT13">
    <property type="organism name" value="human"/>
</dbReference>
<dbReference type="GeneWiki" id="GALNT13"/>
<dbReference type="GenomeRNAi" id="114805"/>
<dbReference type="Pharos" id="Q8IUC8">
    <property type="development level" value="Tbio"/>
</dbReference>
<dbReference type="PRO" id="PR:Q8IUC8"/>
<dbReference type="Proteomes" id="UP000005640">
    <property type="component" value="Chromosome 2"/>
</dbReference>
<dbReference type="RNAct" id="Q8IUC8">
    <property type="molecule type" value="protein"/>
</dbReference>
<dbReference type="Bgee" id="ENSG00000144278">
    <property type="expression patterns" value="Expressed in cerebellar cortex and 134 other cell types or tissues"/>
</dbReference>
<dbReference type="ExpressionAtlas" id="Q8IUC8">
    <property type="expression patterns" value="baseline and differential"/>
</dbReference>
<dbReference type="GO" id="GO:0005794">
    <property type="term" value="C:Golgi apparatus"/>
    <property type="evidence" value="ECO:0000318"/>
    <property type="project" value="GO_Central"/>
</dbReference>
<dbReference type="GO" id="GO:0000139">
    <property type="term" value="C:Golgi membrane"/>
    <property type="evidence" value="ECO:0000304"/>
    <property type="project" value="Reactome"/>
</dbReference>
<dbReference type="GO" id="GO:0030246">
    <property type="term" value="F:carbohydrate binding"/>
    <property type="evidence" value="ECO:0007669"/>
    <property type="project" value="UniProtKB-KW"/>
</dbReference>
<dbReference type="GO" id="GO:0046872">
    <property type="term" value="F:metal ion binding"/>
    <property type="evidence" value="ECO:0007669"/>
    <property type="project" value="UniProtKB-KW"/>
</dbReference>
<dbReference type="GO" id="GO:0004653">
    <property type="term" value="F:polypeptide N-acetylgalactosaminyltransferase activity"/>
    <property type="evidence" value="ECO:0000314"/>
    <property type="project" value="UniProtKB"/>
</dbReference>
<dbReference type="GO" id="GO:0016266">
    <property type="term" value="P:O-glycan processing"/>
    <property type="evidence" value="ECO:0000304"/>
    <property type="project" value="Reactome"/>
</dbReference>
<dbReference type="GO" id="GO:0006493">
    <property type="term" value="P:protein O-linked glycosylation"/>
    <property type="evidence" value="ECO:0000318"/>
    <property type="project" value="GO_Central"/>
</dbReference>
<dbReference type="GO" id="GO:0018242">
    <property type="term" value="P:protein O-linked glycosylation via serine"/>
    <property type="evidence" value="ECO:0000314"/>
    <property type="project" value="UniProtKB"/>
</dbReference>
<dbReference type="GO" id="GO:0018243">
    <property type="term" value="P:protein O-linked glycosylation via threonine"/>
    <property type="evidence" value="ECO:0000314"/>
    <property type="project" value="UniProtKB"/>
</dbReference>
<dbReference type="CDD" id="cd23467">
    <property type="entry name" value="beta-trefoil_Ricin_GALNT13"/>
    <property type="match status" value="1"/>
</dbReference>
<dbReference type="CDD" id="cd02510">
    <property type="entry name" value="pp-GalNAc-T"/>
    <property type="match status" value="1"/>
</dbReference>
<dbReference type="FunFam" id="2.80.10.50:FF:000014">
    <property type="entry name" value="Polypeptide N-acetylgalactosaminyltransferase"/>
    <property type="match status" value="1"/>
</dbReference>
<dbReference type="FunFam" id="3.90.550.10:FF:000005">
    <property type="entry name" value="Polypeptide N-acetylgalactosaminyltransferase"/>
    <property type="match status" value="1"/>
</dbReference>
<dbReference type="Gene3D" id="2.80.10.50">
    <property type="match status" value="1"/>
</dbReference>
<dbReference type="Gene3D" id="3.90.550.10">
    <property type="entry name" value="Spore Coat Polysaccharide Biosynthesis Protein SpsA, Chain A"/>
    <property type="match status" value="1"/>
</dbReference>
<dbReference type="InterPro" id="IPR045885">
    <property type="entry name" value="GalNAc-T"/>
</dbReference>
<dbReference type="InterPro" id="IPR001173">
    <property type="entry name" value="Glyco_trans_2-like"/>
</dbReference>
<dbReference type="InterPro" id="IPR029044">
    <property type="entry name" value="Nucleotide-diphossugar_trans"/>
</dbReference>
<dbReference type="InterPro" id="IPR035992">
    <property type="entry name" value="Ricin_B-like_lectins"/>
</dbReference>
<dbReference type="InterPro" id="IPR000772">
    <property type="entry name" value="Ricin_B_lectin"/>
</dbReference>
<dbReference type="PANTHER" id="PTHR11675">
    <property type="entry name" value="N-ACETYLGALACTOSAMINYLTRANSFERASE"/>
    <property type="match status" value="1"/>
</dbReference>
<dbReference type="PANTHER" id="PTHR11675:SF47">
    <property type="entry name" value="POLYPEPTIDE N-ACETYLGALACTOSAMINYLTRANSFERASE 13"/>
    <property type="match status" value="1"/>
</dbReference>
<dbReference type="Pfam" id="PF00535">
    <property type="entry name" value="Glycos_transf_2"/>
    <property type="match status" value="1"/>
</dbReference>
<dbReference type="Pfam" id="PF00652">
    <property type="entry name" value="Ricin_B_lectin"/>
    <property type="match status" value="1"/>
</dbReference>
<dbReference type="SMART" id="SM00458">
    <property type="entry name" value="RICIN"/>
    <property type="match status" value="1"/>
</dbReference>
<dbReference type="SUPFAM" id="SSF53448">
    <property type="entry name" value="Nucleotide-diphospho-sugar transferases"/>
    <property type="match status" value="1"/>
</dbReference>
<dbReference type="SUPFAM" id="SSF50370">
    <property type="entry name" value="Ricin B-like lectins"/>
    <property type="match status" value="1"/>
</dbReference>
<dbReference type="PROSITE" id="PS50231">
    <property type="entry name" value="RICIN_B_LECTIN"/>
    <property type="match status" value="1"/>
</dbReference>
<gene>
    <name type="primary">GALNT13</name>
    <name type="synonym">KIAA1918</name>
</gene>